<accession>A3SLM3</accession>
<sequence length="447" mass="50973">MTKRVAVIGAGPSGLAQLRAFQSAADQGAEIPEIVCFEKQANWGGLWNYTWRTGLDENGEPVHCSMYRYLWSNGPKEGLEFADYSFEEHFGKQIASYPPRAVLFDYIEGRVHKADVRKWIRFNSPVRWVSYDAETAKFTVTAHNHETDSTYSEDFDHVICASGHFSTPNVPFYEGFDTFNGRIVHAHDFRDAREFEGKDVLVMGASYSAEDIGSQCWKYGAKSITSCYRSAPMGYAWPDNWEEKPALEKLTGKTAHFADGSTRDVDAIILCTGYKHFFSFLPDDLRLKTANRLATADLYKGVAYVHNPAMFYLGMQDQWFTFNMFDAQAWWVRDAILGRITLPKDKAAMLADVAERETREEASDDVKYAIRYQADYVKELVAETDYPSFDIDGACDAFFEWKKHKAKDIMAFRDNSYKSVITGTMAPVHHTPWKEALDDSMEAYLQN</sequence>
<dbReference type="EC" id="1.14.13.148" evidence="1"/>
<dbReference type="EMBL" id="AALY01000001">
    <property type="protein sequence ID" value="EAP78254.1"/>
    <property type="molecule type" value="Genomic_DNA"/>
</dbReference>
<dbReference type="RefSeq" id="WP_009813654.1">
    <property type="nucleotide sequence ID" value="NZ_CH724156.1"/>
</dbReference>
<dbReference type="PDB" id="5GSN">
    <property type="method" value="X-ray"/>
    <property type="resolution" value="2.20 A"/>
    <property type="chains" value="A/B/C/D=1-447"/>
</dbReference>
<dbReference type="PDB" id="5IPY">
    <property type="method" value="X-ray"/>
    <property type="resolution" value="1.50 A"/>
    <property type="chains" value="A/B=1-447"/>
</dbReference>
<dbReference type="PDB" id="5IQ1">
    <property type="method" value="X-ray"/>
    <property type="resolution" value="1.75 A"/>
    <property type="chains" value="A/B=1-447"/>
</dbReference>
<dbReference type="PDB" id="5IQ4">
    <property type="method" value="X-ray"/>
    <property type="resolution" value="1.50 A"/>
    <property type="chains" value="A/B=1-447"/>
</dbReference>
<dbReference type="PDBsum" id="5GSN"/>
<dbReference type="PDBsum" id="5IPY"/>
<dbReference type="PDBsum" id="5IQ1"/>
<dbReference type="PDBsum" id="5IQ4"/>
<dbReference type="SMR" id="A3SLM3"/>
<dbReference type="STRING" id="89187.ISM_08155"/>
<dbReference type="eggNOG" id="COG2072">
    <property type="taxonomic scope" value="Bacteria"/>
</dbReference>
<dbReference type="HOGENOM" id="CLU_006909_3_0_5"/>
<dbReference type="Proteomes" id="UP000005954">
    <property type="component" value="Unassembled WGS sequence"/>
</dbReference>
<dbReference type="GO" id="GO:0050660">
    <property type="term" value="F:flavin adenine dinucleotide binding"/>
    <property type="evidence" value="ECO:0007669"/>
    <property type="project" value="InterPro"/>
</dbReference>
<dbReference type="GO" id="GO:0004499">
    <property type="term" value="F:N,N-dimethylaniline monooxygenase activity"/>
    <property type="evidence" value="ECO:0007669"/>
    <property type="project" value="InterPro"/>
</dbReference>
<dbReference type="GO" id="GO:0050661">
    <property type="term" value="F:NADP binding"/>
    <property type="evidence" value="ECO:0007669"/>
    <property type="project" value="InterPro"/>
</dbReference>
<dbReference type="FunFam" id="3.50.50.60:FF:000138">
    <property type="entry name" value="Flavin-containing monooxygenase"/>
    <property type="match status" value="1"/>
</dbReference>
<dbReference type="Gene3D" id="3.50.50.60">
    <property type="entry name" value="FAD/NAD(P)-binding domain"/>
    <property type="match status" value="2"/>
</dbReference>
<dbReference type="InterPro" id="IPR036188">
    <property type="entry name" value="FAD/NAD-bd_sf"/>
</dbReference>
<dbReference type="InterPro" id="IPR000960">
    <property type="entry name" value="Flavin_mOase"/>
</dbReference>
<dbReference type="InterPro" id="IPR020946">
    <property type="entry name" value="Flavin_mOase-like"/>
</dbReference>
<dbReference type="InterPro" id="IPR050346">
    <property type="entry name" value="FMO-like"/>
</dbReference>
<dbReference type="PANTHER" id="PTHR23023">
    <property type="entry name" value="DIMETHYLANILINE MONOOXYGENASE"/>
    <property type="match status" value="1"/>
</dbReference>
<dbReference type="Pfam" id="PF00743">
    <property type="entry name" value="FMO-like"/>
    <property type="match status" value="2"/>
</dbReference>
<dbReference type="PIRSF" id="PIRSF000332">
    <property type="entry name" value="FMO"/>
    <property type="match status" value="1"/>
</dbReference>
<dbReference type="SUPFAM" id="SSF51905">
    <property type="entry name" value="FAD/NAD(P)-binding domain"/>
    <property type="match status" value="2"/>
</dbReference>
<keyword id="KW-0002">3D-structure</keyword>
<keyword id="KW-0274">FAD</keyword>
<keyword id="KW-0285">Flavoprotein</keyword>
<keyword id="KW-0503">Monooxygenase</keyword>
<keyword id="KW-0521">NADP</keyword>
<keyword id="KW-0560">Oxidoreductase</keyword>
<keyword id="KW-1185">Reference proteome</keyword>
<proteinExistence type="evidence at protein level"/>
<organism>
    <name type="scientific">Roseovarius nubinhibens (strain ATCC BAA-591 / DSM 15170 / ISM)</name>
    <dbReference type="NCBI Taxonomy" id="89187"/>
    <lineage>
        <taxon>Bacteria</taxon>
        <taxon>Pseudomonadati</taxon>
        <taxon>Pseudomonadota</taxon>
        <taxon>Alphaproteobacteria</taxon>
        <taxon>Rhodobacterales</taxon>
        <taxon>Roseobacteraceae</taxon>
        <taxon>Roseovarius</taxon>
    </lineage>
</organism>
<evidence type="ECO:0000269" key="1">
    <source>
    </source>
</evidence>
<evidence type="ECO:0000303" key="2">
    <source>
    </source>
</evidence>
<evidence type="ECO:0000305" key="3"/>
<evidence type="ECO:0000312" key="4">
    <source>
        <dbReference type="EMBL" id="EAP78254.1"/>
    </source>
</evidence>
<evidence type="ECO:0007744" key="5">
    <source>
        <dbReference type="PDB" id="5GSN"/>
    </source>
</evidence>
<evidence type="ECO:0007744" key="6">
    <source>
        <dbReference type="PDB" id="5IPY"/>
    </source>
</evidence>
<evidence type="ECO:0007744" key="7">
    <source>
        <dbReference type="PDB" id="5IQ1"/>
    </source>
</evidence>
<evidence type="ECO:0007744" key="8">
    <source>
        <dbReference type="PDB" id="5IQ4"/>
    </source>
</evidence>
<evidence type="ECO:0007829" key="9">
    <source>
        <dbReference type="PDB" id="5IPY"/>
    </source>
</evidence>
<evidence type="ECO:0007829" key="10">
    <source>
        <dbReference type="PDB" id="5IQ4"/>
    </source>
</evidence>
<reference key="1">
    <citation type="submission" date="2005-12" db="EMBL/GenBank/DDBJ databases">
        <authorList>
            <person name="Moran M.A."/>
            <person name="Ferriera S."/>
            <person name="Johnson J."/>
            <person name="Kravitz S."/>
            <person name="Halpern A."/>
            <person name="Remington K."/>
            <person name="Beeson K."/>
            <person name="Tran B."/>
            <person name="Rogers Y.-H."/>
            <person name="Friedman R."/>
            <person name="Venter J.C."/>
        </authorList>
    </citation>
    <scope>NUCLEOTIDE SEQUENCE [LARGE SCALE GENOMIC DNA]</scope>
    <source>
        <strain>ATCC BAA-591 / DSM 15170 / ISM</strain>
    </source>
</reference>
<reference evidence="5 6 7 8" key="2">
    <citation type="journal article" date="2017" name="Mol. Microbiol.">
        <title>Structural mechanism for bacterial oxidation of oceanic trimethylamine into trimethylamine N-oxide.</title>
        <authorList>
            <person name="Li C.Y."/>
            <person name="Chen X.L."/>
            <person name="Zhang D."/>
            <person name="Wang P."/>
            <person name="Sheng Q."/>
            <person name="Peng M."/>
            <person name="Xie B.B."/>
            <person name="Qin Q.L."/>
            <person name="Li P.Y."/>
            <person name="Zhang X.Y."/>
            <person name="Su H.N."/>
            <person name="Song X.Y."/>
            <person name="Shi M."/>
            <person name="Zhou B.C."/>
            <person name="Xun L.Y."/>
            <person name="Chen Y."/>
            <person name="Zhang Y.Z."/>
        </authorList>
    </citation>
    <scope>X-RAY CRYSTALLOGRAPHY (1.50 ANGSTROMS) OF MUTANTS IN COMPLEXES WITH FAD AND NADP(+)</scope>
    <scope>FUNCTION</scope>
    <scope>CATALYTIC ACTIVITY</scope>
    <scope>REACTION MECHANISM</scope>
    <scope>COFACTOR</scope>
    <scope>BIOPHYSICOCHEMICAL PROPERTIES</scope>
    <scope>MUTAGENESIS OF 153-GLU-ASP-154 AND ASP-317</scope>
    <source>
        <strain>ATCC BAA-591 / DSM 15170 / ISM</strain>
    </source>
</reference>
<gene>
    <name evidence="2" type="primary">tmm</name>
    <name evidence="4" type="ORF">ISM_08155</name>
</gene>
<name>TMM_ROSNI</name>
<protein>
    <recommendedName>
        <fullName evidence="3">Trimethylamine monooxygenase</fullName>
        <shortName evidence="2">TMA monooxygenase</shortName>
        <shortName evidence="2">Tmm</shortName>
        <ecNumber evidence="1">1.14.13.148</ecNumber>
    </recommendedName>
</protein>
<feature type="chain" id="PRO_0000458079" description="Trimethylamine monooxygenase">
    <location>
        <begin position="1"/>
        <end position="447"/>
    </location>
</feature>
<feature type="binding site" evidence="1 5 6 7 8">
    <location>
        <position position="13"/>
    </location>
    <ligand>
        <name>FAD</name>
        <dbReference type="ChEBI" id="CHEBI:57692"/>
    </ligand>
</feature>
<feature type="binding site" evidence="1 5 6 7 8">
    <location>
        <position position="38"/>
    </location>
    <ligand>
        <name>FAD</name>
        <dbReference type="ChEBI" id="CHEBI:57692"/>
    </ligand>
</feature>
<feature type="binding site" evidence="1 5 6 7 8">
    <location>
        <position position="40"/>
    </location>
    <ligand>
        <name>FAD</name>
        <dbReference type="ChEBI" id="CHEBI:57692"/>
    </ligand>
</feature>
<feature type="binding site" evidence="1 5 6 7 8">
    <location>
        <position position="46"/>
    </location>
    <ligand>
        <name>FAD</name>
        <dbReference type="ChEBI" id="CHEBI:57692"/>
    </ligand>
</feature>
<feature type="binding site" evidence="1 5 6 7 8">
    <location>
        <position position="47"/>
    </location>
    <ligand>
        <name>FAD</name>
        <dbReference type="ChEBI" id="CHEBI:57692"/>
    </ligand>
</feature>
<feature type="binding site" evidence="1 5 6 7 8">
    <location>
        <position position="63"/>
    </location>
    <ligand>
        <name>FAD</name>
        <dbReference type="ChEBI" id="CHEBI:57692"/>
    </ligand>
</feature>
<feature type="binding site" evidence="1 6 7">
    <location>
        <position position="71"/>
    </location>
    <ligand>
        <name>NADP(+)</name>
        <dbReference type="ChEBI" id="CHEBI:58349"/>
    </ligand>
</feature>
<feature type="binding site" evidence="1 5 6 7 8">
    <location>
        <position position="73"/>
    </location>
    <ligand>
        <name>FAD</name>
        <dbReference type="ChEBI" id="CHEBI:57692"/>
    </ligand>
</feature>
<feature type="binding site" evidence="1 6 7 8">
    <location>
        <position position="73"/>
    </location>
    <ligand>
        <name>NADP(+)</name>
        <dbReference type="ChEBI" id="CHEBI:58349"/>
    </ligand>
</feature>
<feature type="binding site" evidence="1 5 6 7 8">
    <location>
        <position position="126"/>
    </location>
    <ligand>
        <name>FAD</name>
        <dbReference type="ChEBI" id="CHEBI:57692"/>
    </ligand>
</feature>
<feature type="binding site" evidence="1 5 6 7 8">
    <location>
        <position position="173"/>
    </location>
    <ligand>
        <name>NADP(+)</name>
        <dbReference type="ChEBI" id="CHEBI:58349"/>
    </ligand>
</feature>
<feature type="binding site" evidence="1 5 6 8">
    <location>
        <position position="205"/>
    </location>
    <ligand>
        <name>NADP(+)</name>
        <dbReference type="ChEBI" id="CHEBI:58349"/>
    </ligand>
</feature>
<feature type="binding site" evidence="1 5 6 7 8">
    <location>
        <position position="206"/>
    </location>
    <ligand>
        <name>NADP(+)</name>
        <dbReference type="ChEBI" id="CHEBI:58349"/>
    </ligand>
</feature>
<feature type="binding site" evidence="1 5 6 7 8">
    <location>
        <position position="208"/>
    </location>
    <ligand>
        <name>NADP(+)</name>
        <dbReference type="ChEBI" id="CHEBI:58349"/>
    </ligand>
</feature>
<feature type="binding site" evidence="1 5 6 7 8">
    <location>
        <position position="229"/>
    </location>
    <ligand>
        <name>NADP(+)</name>
        <dbReference type="ChEBI" id="CHEBI:58349"/>
    </ligand>
</feature>
<feature type="binding site" evidence="1 5 6 7 8">
    <location>
        <position position="318"/>
    </location>
    <ligand>
        <name>FAD</name>
        <dbReference type="ChEBI" id="CHEBI:57692"/>
    </ligand>
</feature>
<feature type="binding site" evidence="1 5 6 7 8">
    <location>
        <position position="321"/>
    </location>
    <ligand>
        <name>FAD</name>
        <dbReference type="ChEBI" id="CHEBI:57692"/>
    </ligand>
</feature>
<feature type="binding site" evidence="1 6 7">
    <location>
        <position position="413"/>
    </location>
    <ligand>
        <name>NADP(+)</name>
        <dbReference type="ChEBI" id="CHEBI:58349"/>
    </ligand>
</feature>
<feature type="mutagenesis site" description="Has little effect on catalytic properties." evidence="1">
    <original>ED</original>
    <variation>AA</variation>
    <location>
        <begin position="153"/>
        <end position="154"/>
    </location>
</feature>
<feature type="mutagenesis site" description="Strong decrease in activity." evidence="1">
    <original>D</original>
    <variation>A</variation>
    <location>
        <position position="317"/>
    </location>
</feature>
<feature type="strand" evidence="9">
    <location>
        <begin position="4"/>
        <end position="8"/>
    </location>
</feature>
<feature type="helix" evidence="9">
    <location>
        <begin position="12"/>
        <end position="26"/>
    </location>
</feature>
<feature type="strand" evidence="9">
    <location>
        <begin position="33"/>
        <end position="37"/>
    </location>
</feature>
<feature type="strand" evidence="9">
    <location>
        <begin position="39"/>
        <end position="43"/>
    </location>
</feature>
<feature type="helix" evidence="9">
    <location>
        <begin position="45"/>
        <end position="47"/>
    </location>
</feature>
<feature type="strand" evidence="9">
    <location>
        <begin position="59"/>
        <end position="61"/>
    </location>
</feature>
<feature type="helix" evidence="9">
    <location>
        <begin position="76"/>
        <end position="78"/>
    </location>
</feature>
<feature type="helix" evidence="9">
    <location>
        <begin position="86"/>
        <end position="90"/>
    </location>
</feature>
<feature type="helix" evidence="9">
    <location>
        <begin position="100"/>
        <end position="113"/>
    </location>
</feature>
<feature type="helix" evidence="9">
    <location>
        <begin position="117"/>
        <end position="119"/>
    </location>
</feature>
<feature type="strand" evidence="10">
    <location>
        <begin position="120"/>
        <end position="123"/>
    </location>
</feature>
<feature type="strand" evidence="9">
    <location>
        <begin position="126"/>
        <end position="132"/>
    </location>
</feature>
<feature type="turn" evidence="9">
    <location>
        <begin position="133"/>
        <end position="136"/>
    </location>
</feature>
<feature type="strand" evidence="9">
    <location>
        <begin position="137"/>
        <end position="144"/>
    </location>
</feature>
<feature type="turn" evidence="9">
    <location>
        <begin position="145"/>
        <end position="148"/>
    </location>
</feature>
<feature type="strand" evidence="9">
    <location>
        <begin position="149"/>
        <end position="160"/>
    </location>
</feature>
<feature type="strand" evidence="9">
    <location>
        <begin position="164"/>
        <end position="168"/>
    </location>
</feature>
<feature type="turn" evidence="9">
    <location>
        <begin position="174"/>
        <end position="178"/>
    </location>
</feature>
<feature type="strand" evidence="9">
    <location>
        <begin position="181"/>
        <end position="185"/>
    </location>
</feature>
<feature type="helix" evidence="9">
    <location>
        <begin position="186"/>
        <end position="188"/>
    </location>
</feature>
<feature type="helix" evidence="9">
    <location>
        <begin position="192"/>
        <end position="195"/>
    </location>
</feature>
<feature type="strand" evidence="9">
    <location>
        <begin position="199"/>
        <end position="203"/>
    </location>
</feature>
<feature type="helix" evidence="9">
    <location>
        <begin position="207"/>
        <end position="218"/>
    </location>
</feature>
<feature type="strand" evidence="9">
    <location>
        <begin position="222"/>
        <end position="227"/>
    </location>
</feature>
<feature type="strand" evidence="9">
    <location>
        <begin position="229"/>
        <end position="231"/>
    </location>
</feature>
<feature type="strand" evidence="9">
    <location>
        <begin position="241"/>
        <end position="245"/>
    </location>
</feature>
<feature type="strand" evidence="9">
    <location>
        <begin position="247"/>
        <end position="251"/>
    </location>
</feature>
<feature type="strand" evidence="9">
    <location>
        <begin position="254"/>
        <end position="257"/>
    </location>
</feature>
<feature type="strand" evidence="9">
    <location>
        <begin position="262"/>
        <end position="264"/>
    </location>
</feature>
<feature type="strand" evidence="9">
    <location>
        <begin position="266"/>
        <end position="270"/>
    </location>
</feature>
<feature type="turn" evidence="9">
    <location>
        <begin position="283"/>
        <end position="285"/>
    </location>
</feature>
<feature type="strand" evidence="9">
    <location>
        <begin position="291"/>
        <end position="294"/>
    </location>
</feature>
<feature type="turn" evidence="9">
    <location>
        <begin position="300"/>
        <end position="302"/>
    </location>
</feature>
<feature type="strand" evidence="9">
    <location>
        <begin position="310"/>
        <end position="312"/>
    </location>
</feature>
<feature type="helix" evidence="9">
    <location>
        <begin position="322"/>
        <end position="336"/>
    </location>
</feature>
<feature type="helix" evidence="9">
    <location>
        <begin position="346"/>
        <end position="361"/>
    </location>
</feature>
<feature type="helix" evidence="9">
    <location>
        <begin position="366"/>
        <end position="382"/>
    </location>
</feature>
<feature type="strand" evidence="9">
    <location>
        <begin position="384"/>
        <end position="386"/>
    </location>
</feature>
<feature type="helix" evidence="9">
    <location>
        <begin position="391"/>
        <end position="407"/>
    </location>
</feature>
<feature type="turn" evidence="9">
    <location>
        <begin position="409"/>
        <end position="413"/>
    </location>
</feature>
<feature type="turn" evidence="9">
    <location>
        <begin position="420"/>
        <end position="422"/>
    </location>
</feature>
<feature type="helix" evidence="9">
    <location>
        <begin position="433"/>
        <end position="435"/>
    </location>
</feature>
<feature type="helix" evidence="9">
    <location>
        <begin position="441"/>
        <end position="445"/>
    </location>
</feature>
<comment type="function">
    <text evidence="1">Catalyzes the oxidation of trimethylamine (TMA) to produce trimethylamine N-oxide (TMAO) (PubMed:27997715). TMA is the best substrate, but the enzyme can also oxidize methimazole, indole and dimethylamine (DMA) (PubMed:27997715).</text>
</comment>
<comment type="catalytic activity">
    <reaction evidence="1">
        <text>trimethylamine + NADPH + O2 = trimethylamine N-oxide + NADP(+) + H2O</text>
        <dbReference type="Rhea" id="RHEA:31979"/>
        <dbReference type="ChEBI" id="CHEBI:15377"/>
        <dbReference type="ChEBI" id="CHEBI:15379"/>
        <dbReference type="ChEBI" id="CHEBI:15724"/>
        <dbReference type="ChEBI" id="CHEBI:57783"/>
        <dbReference type="ChEBI" id="CHEBI:58349"/>
        <dbReference type="ChEBI" id="CHEBI:58389"/>
        <dbReference type="EC" id="1.14.13.148"/>
    </reaction>
</comment>
<comment type="cofactor">
    <cofactor evidence="1">
        <name>FAD</name>
        <dbReference type="ChEBI" id="CHEBI:57692"/>
    </cofactor>
</comment>
<comment type="biophysicochemical properties">
    <kinetics>
        <KM evidence="1">110.5 uM for TMA</KM>
        <KM evidence="1">123.3 uM for methimazole</KM>
        <KM evidence="1">244 uM for indole</KM>
        <KM evidence="1">164.9 uM for DMA</KM>
        <text evidence="1">kcat is 0.53 sec(-1) with TMA as substrate. kcat is 0.22 sec(-1) with methimazole as substrate. kcat is 0.15 sec(-1) with indole as substrate. kcat is 0.17 sec(-1) with DMA as substrate.</text>
    </kinetics>
    <phDependence>
        <text evidence="1">Optimum pH is 8.0.</text>
    </phDependence>
    <temperatureDependence>
        <text evidence="1">Optimum temperature is 30 degrees Celsius.</text>
    </temperatureDependence>
</comment>
<comment type="miscellaneous">
    <text evidence="1">The catalytic process consists of a reductive half-reaction and an oxidative half-reaction, via the formation of a C4a-hydroperoxyflavin intermediate (PubMed:27997715). NADP(+) undergoes a conformational change in the oxidative half-reaction (PubMed:27997715).</text>
</comment>
<comment type="similarity">
    <text evidence="3">Belongs to the FMO family.</text>
</comment>